<name>RL24_SULAC</name>
<organism>
    <name type="scientific">Sulfolobus acidocaldarius (strain ATCC 33909 / DSM 639 / JCM 8929 / NBRC 15157 / NCIMB 11770)</name>
    <dbReference type="NCBI Taxonomy" id="330779"/>
    <lineage>
        <taxon>Archaea</taxon>
        <taxon>Thermoproteota</taxon>
        <taxon>Thermoprotei</taxon>
        <taxon>Sulfolobales</taxon>
        <taxon>Sulfolobaceae</taxon>
        <taxon>Sulfolobus</taxon>
    </lineage>
</organism>
<feature type="chain" id="PRO_0000130781" description="Large ribosomal subunit protein uL24">
    <location>
        <begin position="1"/>
        <end position="134"/>
    </location>
</feature>
<accession>O05633</accession>
<accession>Q4JB51</accession>
<evidence type="ECO:0000255" key="1">
    <source>
        <dbReference type="HAMAP-Rule" id="MF_01326"/>
    </source>
</evidence>
<evidence type="ECO:0000305" key="2"/>
<gene>
    <name evidence="1" type="primary">rpl24</name>
    <name type="ordered locus">Saci_0586</name>
</gene>
<protein>
    <recommendedName>
        <fullName evidence="1">Large ribosomal subunit protein uL24</fullName>
    </recommendedName>
    <alternativeName>
        <fullName evidence="2">50S ribosomal protein L24</fullName>
    </alternativeName>
</protein>
<dbReference type="EMBL" id="CP000077">
    <property type="protein sequence ID" value="AAY79978.1"/>
    <property type="molecule type" value="Genomic_DNA"/>
</dbReference>
<dbReference type="EMBL" id="Y07778">
    <property type="protein sequence ID" value="CAA69088.1"/>
    <property type="molecule type" value="Genomic_DNA"/>
</dbReference>
<dbReference type="RefSeq" id="WP_011277480.1">
    <property type="nucleotide sequence ID" value="NC_007181.1"/>
</dbReference>
<dbReference type="PDB" id="8HKU">
    <property type="method" value="EM"/>
    <property type="resolution" value="2.72 A"/>
    <property type="chains" value="L24P=1-122"/>
</dbReference>
<dbReference type="PDB" id="8HKV">
    <property type="method" value="EM"/>
    <property type="resolution" value="4.94 A"/>
    <property type="chains" value="L24P=1-122"/>
</dbReference>
<dbReference type="PDB" id="8HKY">
    <property type="method" value="EM"/>
    <property type="resolution" value="4.45 A"/>
    <property type="chains" value="L24P=1-122"/>
</dbReference>
<dbReference type="PDB" id="8HKZ">
    <property type="method" value="EM"/>
    <property type="resolution" value="4.78 A"/>
    <property type="chains" value="L24P=1-122"/>
</dbReference>
<dbReference type="PDB" id="8HL1">
    <property type="method" value="EM"/>
    <property type="resolution" value="3.93 A"/>
    <property type="chains" value="L24P=1-122"/>
</dbReference>
<dbReference type="PDB" id="8HL2">
    <property type="method" value="EM"/>
    <property type="resolution" value="4.10 A"/>
    <property type="chains" value="L24P=1-122"/>
</dbReference>
<dbReference type="PDB" id="8HL3">
    <property type="method" value="EM"/>
    <property type="resolution" value="4.80 A"/>
    <property type="chains" value="L24P=1-122"/>
</dbReference>
<dbReference type="PDB" id="8HL4">
    <property type="method" value="EM"/>
    <property type="resolution" value="4.62 A"/>
    <property type="chains" value="L24P=1-122"/>
</dbReference>
<dbReference type="PDB" id="8HL5">
    <property type="method" value="EM"/>
    <property type="resolution" value="5.72 A"/>
    <property type="chains" value="L24P=1-122"/>
</dbReference>
<dbReference type="PDBsum" id="8HKU"/>
<dbReference type="PDBsum" id="8HKV"/>
<dbReference type="PDBsum" id="8HKY"/>
<dbReference type="PDBsum" id="8HKZ"/>
<dbReference type="PDBsum" id="8HL1"/>
<dbReference type="PDBsum" id="8HL2"/>
<dbReference type="PDBsum" id="8HL3"/>
<dbReference type="PDBsum" id="8HL4"/>
<dbReference type="PDBsum" id="8HL5"/>
<dbReference type="EMDB" id="EMD-34860"/>
<dbReference type="EMDB" id="EMD-34861"/>
<dbReference type="EMDB" id="EMD-34863"/>
<dbReference type="EMDB" id="EMD-34864"/>
<dbReference type="EMDB" id="EMD-34866"/>
<dbReference type="EMDB" id="EMD-34867"/>
<dbReference type="EMDB" id="EMD-34868"/>
<dbReference type="EMDB" id="EMD-34869"/>
<dbReference type="EMDB" id="EMD-34870"/>
<dbReference type="SMR" id="O05633"/>
<dbReference type="STRING" id="330779.Saci_0586"/>
<dbReference type="GeneID" id="14551107"/>
<dbReference type="KEGG" id="sai:Saci_0586"/>
<dbReference type="PATRIC" id="fig|330779.12.peg.565"/>
<dbReference type="eggNOG" id="arCOG04094">
    <property type="taxonomic scope" value="Archaea"/>
</dbReference>
<dbReference type="HOGENOM" id="CLU_093240_2_1_2"/>
<dbReference type="Proteomes" id="UP000001018">
    <property type="component" value="Chromosome"/>
</dbReference>
<dbReference type="GO" id="GO:0015934">
    <property type="term" value="C:large ribosomal subunit"/>
    <property type="evidence" value="ECO:0007669"/>
    <property type="project" value="InterPro"/>
</dbReference>
<dbReference type="GO" id="GO:0019843">
    <property type="term" value="F:rRNA binding"/>
    <property type="evidence" value="ECO:0007669"/>
    <property type="project" value="UniProtKB-UniRule"/>
</dbReference>
<dbReference type="GO" id="GO:0003735">
    <property type="term" value="F:structural constituent of ribosome"/>
    <property type="evidence" value="ECO:0007669"/>
    <property type="project" value="InterPro"/>
</dbReference>
<dbReference type="GO" id="GO:0006412">
    <property type="term" value="P:translation"/>
    <property type="evidence" value="ECO:0007669"/>
    <property type="project" value="UniProtKB-UniRule"/>
</dbReference>
<dbReference type="CDD" id="cd06089">
    <property type="entry name" value="KOW_RPL26"/>
    <property type="match status" value="1"/>
</dbReference>
<dbReference type="FunFam" id="2.30.30.30:FF:000009">
    <property type="entry name" value="60S ribosomal protein L26"/>
    <property type="match status" value="1"/>
</dbReference>
<dbReference type="Gene3D" id="2.30.30.30">
    <property type="match status" value="1"/>
</dbReference>
<dbReference type="HAMAP" id="MF_01326_A">
    <property type="entry name" value="Ribosomal_uL24_A"/>
    <property type="match status" value="1"/>
</dbReference>
<dbReference type="InterPro" id="IPR005824">
    <property type="entry name" value="KOW"/>
</dbReference>
<dbReference type="InterPro" id="IPR014722">
    <property type="entry name" value="Rib_uL2_dom2"/>
</dbReference>
<dbReference type="InterPro" id="IPR005756">
    <property type="entry name" value="Ribosomal_uL24_euk/arc"/>
</dbReference>
<dbReference type="InterPro" id="IPR041988">
    <property type="entry name" value="Ribosomal_uL24_KOW"/>
</dbReference>
<dbReference type="InterPro" id="IPR008991">
    <property type="entry name" value="Translation_prot_SH3-like_sf"/>
</dbReference>
<dbReference type="NCBIfam" id="TIGR01080">
    <property type="entry name" value="rplX_A_E"/>
    <property type="match status" value="1"/>
</dbReference>
<dbReference type="PANTHER" id="PTHR11143">
    <property type="entry name" value="60S RIBOSOMAL PROTEIN L26 FAMILY MEMBER"/>
    <property type="match status" value="1"/>
</dbReference>
<dbReference type="Pfam" id="PF00467">
    <property type="entry name" value="KOW"/>
    <property type="match status" value="1"/>
</dbReference>
<dbReference type="Pfam" id="PF16906">
    <property type="entry name" value="Ribosomal_L26"/>
    <property type="match status" value="1"/>
</dbReference>
<dbReference type="SMART" id="SM00739">
    <property type="entry name" value="KOW"/>
    <property type="match status" value="1"/>
</dbReference>
<dbReference type="SUPFAM" id="SSF50104">
    <property type="entry name" value="Translation proteins SH3-like domain"/>
    <property type="match status" value="1"/>
</dbReference>
<sequence>MISSKPSKQRKLVYNLPNHLRYKLLTARLSEDLEKQYGIKRISIRKGDSVKLMRGSQVGYEGKVVEVDRKRGRVAIEGLTKKKADGTPVYVWVHASKVIITKLDTGDKERMDAIERKRKMREEYFSKKSPKEVS</sequence>
<reference key="1">
    <citation type="journal article" date="2005" name="J. Bacteriol.">
        <title>The genome of Sulfolobus acidocaldarius, a model organism of the Crenarchaeota.</title>
        <authorList>
            <person name="Chen L."/>
            <person name="Bruegger K."/>
            <person name="Skovgaard M."/>
            <person name="Redder P."/>
            <person name="She Q."/>
            <person name="Torarinsson E."/>
            <person name="Greve B."/>
            <person name="Awayez M."/>
            <person name="Zibat A."/>
            <person name="Klenk H.-P."/>
            <person name="Garrett R.A."/>
        </authorList>
    </citation>
    <scope>NUCLEOTIDE SEQUENCE [LARGE SCALE GENOMIC DNA]</scope>
    <source>
        <strain>ATCC 33909 / DSM 639 / JCM 8929 / NBRC 15157 / NCIMB 11770</strain>
    </source>
</reference>
<reference key="2">
    <citation type="journal article" date="1999" name="Mol. Phylogenet. Evol.">
        <title>The structure and evolution of the ribosomal proteins encoded in the spc operon of the archaeon (Crenarchaeota) Sulfolobus acidocaldarius.</title>
        <authorList>
            <person name="Yang D."/>
            <person name="Kusser I."/>
            <person name="Koepke A.K."/>
            <person name="Koop B.F."/>
            <person name="Matheson A.T."/>
        </authorList>
    </citation>
    <scope>NUCLEOTIDE SEQUENCE [GENOMIC DNA] OF 51-134</scope>
    <source>
        <strain>ATCC 33909 / DSM 639 / JCM 8929 / NBRC 15157 / NCIMB 11770</strain>
    </source>
</reference>
<comment type="function">
    <text evidence="1">One of two assembly initiator proteins, it binds directly to the 5'-end of the 23S rRNA, where it nucleates assembly of the 50S subunit.</text>
</comment>
<comment type="function">
    <text evidence="1">Located at the polypeptide exit tunnel on the outside of the subunit.</text>
</comment>
<comment type="subunit">
    <text evidence="1">Part of the 50S ribosomal subunit.</text>
</comment>
<comment type="similarity">
    <text evidence="1">Belongs to the universal ribosomal protein uL24 family.</text>
</comment>
<proteinExistence type="evidence at protein level"/>
<keyword id="KW-0002">3D-structure</keyword>
<keyword id="KW-1185">Reference proteome</keyword>
<keyword id="KW-0687">Ribonucleoprotein</keyword>
<keyword id="KW-0689">Ribosomal protein</keyword>
<keyword id="KW-0694">RNA-binding</keyword>
<keyword id="KW-0699">rRNA-binding</keyword>